<name>RK5_ORYSJ</name>
<organism>
    <name type="scientific">Oryza sativa subsp. japonica</name>
    <name type="common">Rice</name>
    <dbReference type="NCBI Taxonomy" id="39947"/>
    <lineage>
        <taxon>Eukaryota</taxon>
        <taxon>Viridiplantae</taxon>
        <taxon>Streptophyta</taxon>
        <taxon>Embryophyta</taxon>
        <taxon>Tracheophyta</taxon>
        <taxon>Spermatophyta</taxon>
        <taxon>Magnoliopsida</taxon>
        <taxon>Liliopsida</taxon>
        <taxon>Poales</taxon>
        <taxon>Poaceae</taxon>
        <taxon>BOP clade</taxon>
        <taxon>Oryzoideae</taxon>
        <taxon>Oryzeae</taxon>
        <taxon>Oryzinae</taxon>
        <taxon>Oryza</taxon>
        <taxon>Oryza sativa</taxon>
    </lineage>
</organism>
<proteinExistence type="evidence at transcript level"/>
<sequence>MAATAVTLPSSPAPFPVTTTASSSRNVRLLLRSPPPRRALRVAASAAADAPPKPAPPPTSPSGIVLVDPTEAQKVHRLKAVYDQKVVPLITEEFGYTNVHQVPKVEKIVVNCGLGAEAGNSKGLESAMKDLAMITGQWPVKTKAKKSVASFKIREGNTIGIAVTLRGRVMFNFLDRLINLGLPRTMDFLGVNPNSFDGHGNFTIGLRDQGVFPEIPYEVGGKKNGMDVCIVTTAKTDNEALRLLTLLGMPFAEHIKSSVVIRKKRLKRHHFMSKGRGRR</sequence>
<reference key="1">
    <citation type="submission" date="1998-09" db="EMBL/GenBank/DDBJ databases">
        <title>Molecular cloning and characterization of three nuclear-encoded chloroplast precursor of ribosomal protein genes in rice.</title>
        <authorList>
            <person name="Lee J.-S."/>
            <person name="Eun M.-Y."/>
        </authorList>
    </citation>
    <scope>NUCLEOTIDE SEQUENCE [MRNA]</scope>
    <source>
        <strain>cv. Ilpoom</strain>
        <tissue>Leaf</tissue>
    </source>
</reference>
<reference key="2">
    <citation type="journal article" date="2005" name="Genome Res.">
        <title>Sequence, annotation, and analysis of synteny between rice chromosome 3 and diverged grass species.</title>
        <authorList>
            <consortium name="The rice chromosome 3 sequencing consortium"/>
            <person name="Buell C.R."/>
            <person name="Yuan Q."/>
            <person name="Ouyang S."/>
            <person name="Liu J."/>
            <person name="Zhu W."/>
            <person name="Wang A."/>
            <person name="Maiti R."/>
            <person name="Haas B."/>
            <person name="Wortman J."/>
            <person name="Pertea M."/>
            <person name="Jones K.M."/>
            <person name="Kim M."/>
            <person name="Overton L."/>
            <person name="Tsitrin T."/>
            <person name="Fadrosh D."/>
            <person name="Bera J."/>
            <person name="Weaver B."/>
            <person name="Jin S."/>
            <person name="Johri S."/>
            <person name="Reardon M."/>
            <person name="Webb K."/>
            <person name="Hill J."/>
            <person name="Moffat K."/>
            <person name="Tallon L."/>
            <person name="Van Aken S."/>
            <person name="Lewis M."/>
            <person name="Utterback T."/>
            <person name="Feldblyum T."/>
            <person name="Zismann V."/>
            <person name="Iobst S."/>
            <person name="Hsiao J."/>
            <person name="de Vazeille A.R."/>
            <person name="Salzberg S.L."/>
            <person name="White O."/>
            <person name="Fraser C.M."/>
            <person name="Yu Y."/>
            <person name="Kim H."/>
            <person name="Rambo T."/>
            <person name="Currie J."/>
            <person name="Collura K."/>
            <person name="Kernodle-Thompson S."/>
            <person name="Wei F."/>
            <person name="Kudrna K."/>
            <person name="Ammiraju J.S.S."/>
            <person name="Luo M."/>
            <person name="Goicoechea J.L."/>
            <person name="Wing R.A."/>
            <person name="Henry D."/>
            <person name="Oates R."/>
            <person name="Palmer M."/>
            <person name="Pries G."/>
            <person name="Saski C."/>
            <person name="Simmons J."/>
            <person name="Soderlund C."/>
            <person name="Nelson W."/>
            <person name="de la Bastide M."/>
            <person name="Spiegel L."/>
            <person name="Nascimento L."/>
            <person name="Huang E."/>
            <person name="Preston R."/>
            <person name="Zutavern T."/>
            <person name="Palmer L."/>
            <person name="O'Shaughnessy A."/>
            <person name="Dike S."/>
            <person name="McCombie W.R."/>
            <person name="Minx P."/>
            <person name="Cordum H."/>
            <person name="Wilson R."/>
            <person name="Jin W."/>
            <person name="Lee H.R."/>
            <person name="Jiang J."/>
            <person name="Jackson S."/>
        </authorList>
    </citation>
    <scope>NUCLEOTIDE SEQUENCE [LARGE SCALE GENOMIC DNA]</scope>
    <source>
        <strain>cv. Nipponbare</strain>
    </source>
</reference>
<reference key="3">
    <citation type="journal article" date="2005" name="Nature">
        <title>The map-based sequence of the rice genome.</title>
        <authorList>
            <consortium name="International rice genome sequencing project (IRGSP)"/>
        </authorList>
    </citation>
    <scope>NUCLEOTIDE SEQUENCE [LARGE SCALE GENOMIC DNA]</scope>
    <source>
        <strain>cv. Nipponbare</strain>
    </source>
</reference>
<reference key="4">
    <citation type="journal article" date="2008" name="Nucleic Acids Res.">
        <title>The rice annotation project database (RAP-DB): 2008 update.</title>
        <authorList>
            <consortium name="The rice annotation project (RAP)"/>
        </authorList>
    </citation>
    <scope>GENOME REANNOTATION</scope>
    <source>
        <strain>cv. Nipponbare</strain>
    </source>
</reference>
<reference key="5">
    <citation type="journal article" date="2013" name="Rice">
        <title>Improvement of the Oryza sativa Nipponbare reference genome using next generation sequence and optical map data.</title>
        <authorList>
            <person name="Kawahara Y."/>
            <person name="de la Bastide M."/>
            <person name="Hamilton J.P."/>
            <person name="Kanamori H."/>
            <person name="McCombie W.R."/>
            <person name="Ouyang S."/>
            <person name="Schwartz D.C."/>
            <person name="Tanaka T."/>
            <person name="Wu J."/>
            <person name="Zhou S."/>
            <person name="Childs K.L."/>
            <person name="Davidson R.M."/>
            <person name="Lin H."/>
            <person name="Quesada-Ocampo L."/>
            <person name="Vaillancourt B."/>
            <person name="Sakai H."/>
            <person name="Lee S.S."/>
            <person name="Kim J."/>
            <person name="Numa H."/>
            <person name="Itoh T."/>
            <person name="Buell C.R."/>
            <person name="Matsumoto T."/>
        </authorList>
    </citation>
    <scope>GENOME REANNOTATION</scope>
    <source>
        <strain>cv. Nipponbare</strain>
    </source>
</reference>
<reference key="6">
    <citation type="journal article" date="2003" name="Science">
        <title>Collection, mapping, and annotation of over 28,000 cDNA clones from japonica rice.</title>
        <authorList>
            <consortium name="The rice full-length cDNA consortium"/>
        </authorList>
    </citation>
    <scope>NUCLEOTIDE SEQUENCE [LARGE SCALE MRNA]</scope>
    <source>
        <strain>cv. Nipponbare</strain>
    </source>
</reference>
<protein>
    <recommendedName>
        <fullName evidence="4">Large ribosomal subunit protein uL5c</fullName>
    </recommendedName>
    <alternativeName>
        <fullName>50S ribosomal protein L5, chloroplastic</fullName>
    </alternativeName>
</protein>
<dbReference type="EMBL" id="AF095708">
    <property type="protein sequence ID" value="AAC64970.1"/>
    <property type="molecule type" value="mRNA"/>
</dbReference>
<dbReference type="EMBL" id="AC119747">
    <property type="status" value="NOT_ANNOTATED_CDS"/>
    <property type="molecule type" value="Genomic_DNA"/>
</dbReference>
<dbReference type="EMBL" id="DP000009">
    <property type="protein sequence ID" value="ABF93741.1"/>
    <property type="molecule type" value="Genomic_DNA"/>
</dbReference>
<dbReference type="EMBL" id="AP008209">
    <property type="protein sequence ID" value="BAF10728.1"/>
    <property type="molecule type" value="Genomic_DNA"/>
</dbReference>
<dbReference type="EMBL" id="AP014959">
    <property type="protein sequence ID" value="BAS82066.1"/>
    <property type="molecule type" value="Genomic_DNA"/>
</dbReference>
<dbReference type="EMBL" id="AK059557">
    <property type="protein sequence ID" value="BAG87031.1"/>
    <property type="molecule type" value="mRNA"/>
</dbReference>
<dbReference type="EMBL" id="AK070779">
    <property type="protein sequence ID" value="BAG92135.1"/>
    <property type="molecule type" value="mRNA"/>
</dbReference>
<dbReference type="EMBL" id="AK098999">
    <property type="protein sequence ID" value="BAG93857.1"/>
    <property type="molecule type" value="mRNA"/>
</dbReference>
<dbReference type="EMBL" id="AK104137">
    <property type="protein sequence ID" value="BAG96446.1"/>
    <property type="molecule type" value="mRNA"/>
</dbReference>
<dbReference type="RefSeq" id="XP_015627856.1">
    <property type="nucleotide sequence ID" value="XM_015772370.1"/>
</dbReference>
<dbReference type="SMR" id="Q9ZST0"/>
<dbReference type="FunCoup" id="Q9ZST0">
    <property type="interactions" value="834"/>
</dbReference>
<dbReference type="STRING" id="39947.Q9ZST0"/>
<dbReference type="PaxDb" id="39947-Q9ZST0"/>
<dbReference type="EnsemblPlants" id="Os03t0125000-01">
    <property type="protein sequence ID" value="Os03t0125000-01"/>
    <property type="gene ID" value="Os03g0125000"/>
</dbReference>
<dbReference type="EnsemblPlants" id="Os03t0125000-02">
    <property type="protein sequence ID" value="Os03t0125000-02"/>
    <property type="gene ID" value="Os03g0125000"/>
</dbReference>
<dbReference type="Gramene" id="Os03t0125000-01">
    <property type="protein sequence ID" value="Os03t0125000-01"/>
    <property type="gene ID" value="Os03g0125000"/>
</dbReference>
<dbReference type="Gramene" id="Os03t0125000-02">
    <property type="protein sequence ID" value="Os03t0125000-02"/>
    <property type="gene ID" value="Os03g0125000"/>
</dbReference>
<dbReference type="KEGG" id="dosa:Os03g0125000"/>
<dbReference type="eggNOG" id="KOG0398">
    <property type="taxonomic scope" value="Eukaryota"/>
</dbReference>
<dbReference type="HOGENOM" id="CLU_061015_0_0_1"/>
<dbReference type="InParanoid" id="Q9ZST0"/>
<dbReference type="OMA" id="KLKAHHF"/>
<dbReference type="OrthoDB" id="539541at2759"/>
<dbReference type="Proteomes" id="UP000000763">
    <property type="component" value="Chromosome 3"/>
</dbReference>
<dbReference type="Proteomes" id="UP000059680">
    <property type="component" value="Chromosome 3"/>
</dbReference>
<dbReference type="GO" id="GO:0009507">
    <property type="term" value="C:chloroplast"/>
    <property type="evidence" value="ECO:0007669"/>
    <property type="project" value="UniProtKB-SubCell"/>
</dbReference>
<dbReference type="GO" id="GO:1990904">
    <property type="term" value="C:ribonucleoprotein complex"/>
    <property type="evidence" value="ECO:0007669"/>
    <property type="project" value="UniProtKB-KW"/>
</dbReference>
<dbReference type="GO" id="GO:0005840">
    <property type="term" value="C:ribosome"/>
    <property type="evidence" value="ECO:0007669"/>
    <property type="project" value="UniProtKB-KW"/>
</dbReference>
<dbReference type="GO" id="GO:0003723">
    <property type="term" value="F:RNA binding"/>
    <property type="evidence" value="ECO:0000318"/>
    <property type="project" value="GO_Central"/>
</dbReference>
<dbReference type="GO" id="GO:0019843">
    <property type="term" value="F:rRNA binding"/>
    <property type="evidence" value="ECO:0007669"/>
    <property type="project" value="UniProtKB-KW"/>
</dbReference>
<dbReference type="GO" id="GO:0003735">
    <property type="term" value="F:structural constituent of ribosome"/>
    <property type="evidence" value="ECO:0000318"/>
    <property type="project" value="GO_Central"/>
</dbReference>
<dbReference type="GO" id="GO:0006412">
    <property type="term" value="P:translation"/>
    <property type="evidence" value="ECO:0000318"/>
    <property type="project" value="GO_Central"/>
</dbReference>
<dbReference type="FunFam" id="3.30.1440.10:FF:000001">
    <property type="entry name" value="50S ribosomal protein L5"/>
    <property type="match status" value="1"/>
</dbReference>
<dbReference type="Gene3D" id="3.30.1440.10">
    <property type="match status" value="1"/>
</dbReference>
<dbReference type="HAMAP" id="MF_01333_B">
    <property type="entry name" value="Ribosomal_uL5_B"/>
    <property type="match status" value="1"/>
</dbReference>
<dbReference type="InterPro" id="IPR002132">
    <property type="entry name" value="Ribosomal_uL5"/>
</dbReference>
<dbReference type="InterPro" id="IPR020930">
    <property type="entry name" value="Ribosomal_uL5_bac-type"/>
</dbReference>
<dbReference type="InterPro" id="IPR031309">
    <property type="entry name" value="Ribosomal_uL5_C"/>
</dbReference>
<dbReference type="InterPro" id="IPR020929">
    <property type="entry name" value="Ribosomal_uL5_CS"/>
</dbReference>
<dbReference type="InterPro" id="IPR022803">
    <property type="entry name" value="Ribosomal_uL5_dom_sf"/>
</dbReference>
<dbReference type="InterPro" id="IPR031310">
    <property type="entry name" value="Ribosomal_uL5_N"/>
</dbReference>
<dbReference type="NCBIfam" id="NF000585">
    <property type="entry name" value="PRK00010.1"/>
    <property type="match status" value="1"/>
</dbReference>
<dbReference type="PANTHER" id="PTHR11994">
    <property type="entry name" value="60S RIBOSOMAL PROTEIN L11-RELATED"/>
    <property type="match status" value="1"/>
</dbReference>
<dbReference type="Pfam" id="PF00281">
    <property type="entry name" value="Ribosomal_L5"/>
    <property type="match status" value="1"/>
</dbReference>
<dbReference type="Pfam" id="PF00673">
    <property type="entry name" value="Ribosomal_L5_C"/>
    <property type="match status" value="1"/>
</dbReference>
<dbReference type="SUPFAM" id="SSF55282">
    <property type="entry name" value="RL5-like"/>
    <property type="match status" value="1"/>
</dbReference>
<dbReference type="PROSITE" id="PS00358">
    <property type="entry name" value="RIBOSOMAL_L5"/>
    <property type="match status" value="1"/>
</dbReference>
<gene>
    <name type="primary">RPL5</name>
    <name type="ordered locus">Os03g0125000</name>
    <name type="ordered locus">LOC_Os03g03360</name>
</gene>
<evidence type="ECO:0000250" key="1"/>
<evidence type="ECO:0000255" key="2"/>
<evidence type="ECO:0000256" key="3">
    <source>
        <dbReference type="SAM" id="MobiDB-lite"/>
    </source>
</evidence>
<evidence type="ECO:0000305" key="4"/>
<accession>Q9ZST0</accession>
<accession>Q10SE8</accession>
<comment type="function">
    <text evidence="1">Binds 5S rRNA, forms part of the central protuberance of the 50S subunit.</text>
</comment>
<comment type="subunit">
    <text evidence="1">Part of the 50S ribosomal subunit; contacts the 5S rRNA.</text>
</comment>
<comment type="subcellular location">
    <subcellularLocation>
        <location>Plastid</location>
        <location>Chloroplast</location>
    </subcellularLocation>
</comment>
<comment type="similarity">
    <text evidence="4">Belongs to the universal ribosomal protein uL5 family.</text>
</comment>
<keyword id="KW-0150">Chloroplast</keyword>
<keyword id="KW-0934">Plastid</keyword>
<keyword id="KW-1185">Reference proteome</keyword>
<keyword id="KW-0687">Ribonucleoprotein</keyword>
<keyword id="KW-0689">Ribosomal protein</keyword>
<keyword id="KW-0694">RNA-binding</keyword>
<keyword id="KW-0699">rRNA-binding</keyword>
<keyword id="KW-0809">Transit peptide</keyword>
<feature type="transit peptide" description="Chloroplast" evidence="2">
    <location>
        <begin position="1"/>
        <end position="43"/>
    </location>
</feature>
<feature type="chain" id="PRO_0000030543" description="Large ribosomal subunit protein uL5c">
    <location>
        <begin position="44"/>
        <end position="279"/>
    </location>
</feature>
<feature type="region of interest" description="Disordered" evidence="3">
    <location>
        <begin position="1"/>
        <end position="23"/>
    </location>
</feature>
<feature type="region of interest" description="Disordered" evidence="3">
    <location>
        <begin position="40"/>
        <end position="63"/>
    </location>
</feature>
<feature type="compositionally biased region" description="Low complexity" evidence="3">
    <location>
        <begin position="41"/>
        <end position="50"/>
    </location>
</feature>
<feature type="compositionally biased region" description="Pro residues" evidence="3">
    <location>
        <begin position="51"/>
        <end position="60"/>
    </location>
</feature>
<feature type="sequence conflict" description="In Ref. 1." evidence="4" ref="1">
    <original>MAA</original>
    <variation>HEAV</variation>
    <location>
        <begin position="1"/>
        <end position="3"/>
    </location>
</feature>